<protein>
    <recommendedName>
        <fullName evidence="2">Probable translation initiation factor IF-2</fullName>
    </recommendedName>
</protein>
<feature type="chain" id="PRO_1000008271" description="Probable translation initiation factor IF-2">
    <location>
        <begin position="1"/>
        <end position="591"/>
    </location>
</feature>
<feature type="domain" description="tr-type G">
    <location>
        <begin position="7"/>
        <end position="223"/>
    </location>
</feature>
<feature type="region of interest" description="G1" evidence="1">
    <location>
        <begin position="16"/>
        <end position="23"/>
    </location>
</feature>
<feature type="region of interest" description="G2" evidence="1">
    <location>
        <begin position="41"/>
        <end position="45"/>
    </location>
</feature>
<feature type="region of interest" description="G3" evidence="1">
    <location>
        <begin position="78"/>
        <end position="81"/>
    </location>
</feature>
<feature type="region of interest" description="G4" evidence="1">
    <location>
        <begin position="132"/>
        <end position="135"/>
    </location>
</feature>
<feature type="region of interest" description="G5" evidence="1">
    <location>
        <begin position="200"/>
        <end position="202"/>
    </location>
</feature>
<feature type="binding site" evidence="2">
    <location>
        <begin position="16"/>
        <end position="23"/>
    </location>
    <ligand>
        <name>GTP</name>
        <dbReference type="ChEBI" id="CHEBI:37565"/>
    </ligand>
</feature>
<feature type="binding site" evidence="2">
    <location>
        <begin position="78"/>
        <end position="82"/>
    </location>
    <ligand>
        <name>GTP</name>
        <dbReference type="ChEBI" id="CHEBI:37565"/>
    </ligand>
</feature>
<feature type="binding site" evidence="2">
    <location>
        <begin position="132"/>
        <end position="135"/>
    </location>
    <ligand>
        <name>GTP</name>
        <dbReference type="ChEBI" id="CHEBI:37565"/>
    </ligand>
</feature>
<reference key="1">
    <citation type="journal article" date="2009" name="ISME J.">
        <title>The genome sequence of the psychrophilic archaeon, Methanococcoides burtonii: the role of genome evolution in cold adaptation.</title>
        <authorList>
            <person name="Allen M.A."/>
            <person name="Lauro F.M."/>
            <person name="Williams T.J."/>
            <person name="Burg D."/>
            <person name="Siddiqui K.S."/>
            <person name="De Francisci D."/>
            <person name="Chong K.W."/>
            <person name="Pilak O."/>
            <person name="Chew H.H."/>
            <person name="De Maere M.Z."/>
            <person name="Ting L."/>
            <person name="Katrib M."/>
            <person name="Ng C."/>
            <person name="Sowers K.R."/>
            <person name="Galperin M.Y."/>
            <person name="Anderson I.J."/>
            <person name="Ivanova N."/>
            <person name="Dalin E."/>
            <person name="Martinez M."/>
            <person name="Lapidus A."/>
            <person name="Hauser L."/>
            <person name="Land M."/>
            <person name="Thomas T."/>
            <person name="Cavicchioli R."/>
        </authorList>
    </citation>
    <scope>NUCLEOTIDE SEQUENCE [LARGE SCALE GENOMIC DNA]</scope>
    <source>
        <strain>DSM 6242 / NBRC 107633 / OCM 468 / ACE-M</strain>
    </source>
</reference>
<sequence length="591" mass="64256">MVVKDNLRTPIVCVMGHVDHGKTSLLDMIRGSAVVSGEAGAITQHIGATEVPISAIVEKCGNPGLLDKFMVPGLLFIDTPGHHAFTTLRSRGGALADLAVVIVDINEGFKPQTIESLNILQQHKTPFVVVANKIDKIHGWNPQKGAPFMTSYNKQSEHVRGSLDTKFYEVVGELYNHGFSSDRYDRVNDFQHNIGVIPISAITGEGIPDLLMVLLGLAQRFLESNLHYNAEGPGVGTVLEVKEERGLGTTLDLILYDGVLKKGDTIVVGCLGEPIQTKVRAVLKPRALSEINVEDKFKQVSKVTAAVGVKISAPHLDGALSGGSVRVATAETLDAVVEEVRNEIEDVQIDTDQSGITIKADTIGSLEALVNELKKEDIPIRKANVGDISNRDIMEAFAIEDPFHSVIVGFNVNILPDAKEKVRSTGVKVFMNDVIYRLIDDYRDWVKEQRAISEKAVSETIVKPAMFTIMPDCVFRQSKPAVVGVRVIGGTIKTKVDVATGDGTVVGIVKGLQSRGENVSVATIGMEVAMSIEGPTVGRQINEGDILHANIPERHVKILEQELYDSLSADELEALDSFLDIKRRDNPFWAK</sequence>
<accession>Q12Z93</accession>
<comment type="function">
    <text evidence="2">Function in general translation initiation by promoting the binding of the formylmethionine-tRNA to ribosomes. Seems to function along with eIF-2.</text>
</comment>
<comment type="similarity">
    <text evidence="2">Belongs to the TRAFAC class translation factor GTPase superfamily. Classic translation factor GTPase family. IF-2 subfamily.</text>
</comment>
<gene>
    <name evidence="2" type="primary">infB</name>
    <name type="ordered locus">Mbur_0223</name>
</gene>
<dbReference type="EMBL" id="CP000300">
    <property type="protein sequence ID" value="ABE51233.1"/>
    <property type="molecule type" value="Genomic_DNA"/>
</dbReference>
<dbReference type="RefSeq" id="WP_011498395.1">
    <property type="nucleotide sequence ID" value="NC_007955.1"/>
</dbReference>
<dbReference type="SMR" id="Q12Z93"/>
<dbReference type="STRING" id="259564.Mbur_0223"/>
<dbReference type="GeneID" id="3997659"/>
<dbReference type="KEGG" id="mbu:Mbur_0223"/>
<dbReference type="HOGENOM" id="CLU_002656_3_3_2"/>
<dbReference type="OrthoDB" id="30957at2157"/>
<dbReference type="Proteomes" id="UP000001979">
    <property type="component" value="Chromosome"/>
</dbReference>
<dbReference type="GO" id="GO:0005737">
    <property type="term" value="C:cytoplasm"/>
    <property type="evidence" value="ECO:0007669"/>
    <property type="project" value="TreeGrafter"/>
</dbReference>
<dbReference type="GO" id="GO:0005525">
    <property type="term" value="F:GTP binding"/>
    <property type="evidence" value="ECO:0007669"/>
    <property type="project" value="UniProtKB-KW"/>
</dbReference>
<dbReference type="GO" id="GO:0003924">
    <property type="term" value="F:GTPase activity"/>
    <property type="evidence" value="ECO:0007669"/>
    <property type="project" value="UniProtKB-UniRule"/>
</dbReference>
<dbReference type="GO" id="GO:0003743">
    <property type="term" value="F:translation initiation factor activity"/>
    <property type="evidence" value="ECO:0007669"/>
    <property type="project" value="UniProtKB-UniRule"/>
</dbReference>
<dbReference type="CDD" id="cd03703">
    <property type="entry name" value="aeIF5B_II"/>
    <property type="match status" value="1"/>
</dbReference>
<dbReference type="CDD" id="cd16266">
    <property type="entry name" value="IF2_aeIF5B_IV"/>
    <property type="match status" value="1"/>
</dbReference>
<dbReference type="CDD" id="cd01887">
    <property type="entry name" value="IF2_eIF5B"/>
    <property type="match status" value="1"/>
</dbReference>
<dbReference type="FunFam" id="3.40.50.300:FF:000112">
    <property type="entry name" value="Eukaryotic translation initiation factor 5B"/>
    <property type="match status" value="1"/>
</dbReference>
<dbReference type="FunFam" id="3.40.50.10050:FF:000001">
    <property type="entry name" value="Translation initiation factor IF-2"/>
    <property type="match status" value="1"/>
</dbReference>
<dbReference type="Gene3D" id="3.40.50.300">
    <property type="entry name" value="P-loop containing nucleotide triphosphate hydrolases"/>
    <property type="match status" value="1"/>
</dbReference>
<dbReference type="Gene3D" id="2.40.30.10">
    <property type="entry name" value="Translation factors"/>
    <property type="match status" value="2"/>
</dbReference>
<dbReference type="Gene3D" id="3.40.50.10050">
    <property type="entry name" value="Translation initiation factor IF- 2, domain 3"/>
    <property type="match status" value="1"/>
</dbReference>
<dbReference type="HAMAP" id="MF_00100_A">
    <property type="entry name" value="IF_2_A"/>
    <property type="match status" value="1"/>
</dbReference>
<dbReference type="InterPro" id="IPR029459">
    <property type="entry name" value="EFTU-type"/>
</dbReference>
<dbReference type="InterPro" id="IPR027417">
    <property type="entry name" value="P-loop_NTPase"/>
</dbReference>
<dbReference type="InterPro" id="IPR005225">
    <property type="entry name" value="Small_GTP-bd"/>
</dbReference>
<dbReference type="InterPro" id="IPR000795">
    <property type="entry name" value="T_Tr_GTP-bd_dom"/>
</dbReference>
<dbReference type="InterPro" id="IPR004544">
    <property type="entry name" value="TF_aIF-2_arc"/>
</dbReference>
<dbReference type="InterPro" id="IPR015760">
    <property type="entry name" value="TIF_IF2"/>
</dbReference>
<dbReference type="InterPro" id="IPR023115">
    <property type="entry name" value="TIF_IF2_dom3"/>
</dbReference>
<dbReference type="InterPro" id="IPR036925">
    <property type="entry name" value="TIF_IF2_dom3_sf"/>
</dbReference>
<dbReference type="InterPro" id="IPR009000">
    <property type="entry name" value="Transl_B-barrel_sf"/>
</dbReference>
<dbReference type="NCBIfam" id="TIGR00491">
    <property type="entry name" value="aIF-2"/>
    <property type="match status" value="1"/>
</dbReference>
<dbReference type="NCBIfam" id="NF003078">
    <property type="entry name" value="PRK04004.1"/>
    <property type="match status" value="1"/>
</dbReference>
<dbReference type="NCBIfam" id="NF011418">
    <property type="entry name" value="PRK14845.1"/>
    <property type="match status" value="1"/>
</dbReference>
<dbReference type="NCBIfam" id="TIGR00231">
    <property type="entry name" value="small_GTP"/>
    <property type="match status" value="1"/>
</dbReference>
<dbReference type="PANTHER" id="PTHR43381:SF4">
    <property type="entry name" value="EUKARYOTIC TRANSLATION INITIATION FACTOR 5B"/>
    <property type="match status" value="1"/>
</dbReference>
<dbReference type="PANTHER" id="PTHR43381">
    <property type="entry name" value="TRANSLATION INITIATION FACTOR IF-2-RELATED"/>
    <property type="match status" value="1"/>
</dbReference>
<dbReference type="Pfam" id="PF00009">
    <property type="entry name" value="GTP_EFTU"/>
    <property type="match status" value="1"/>
</dbReference>
<dbReference type="Pfam" id="PF14578">
    <property type="entry name" value="GTP_EFTU_D4"/>
    <property type="match status" value="1"/>
</dbReference>
<dbReference type="Pfam" id="PF11987">
    <property type="entry name" value="IF-2"/>
    <property type="match status" value="1"/>
</dbReference>
<dbReference type="PRINTS" id="PR00315">
    <property type="entry name" value="ELONGATNFCT"/>
</dbReference>
<dbReference type="SUPFAM" id="SSF52156">
    <property type="entry name" value="Initiation factor IF2/eIF5b, domain 3"/>
    <property type="match status" value="1"/>
</dbReference>
<dbReference type="SUPFAM" id="SSF52540">
    <property type="entry name" value="P-loop containing nucleoside triphosphate hydrolases"/>
    <property type="match status" value="1"/>
</dbReference>
<dbReference type="SUPFAM" id="SSF50447">
    <property type="entry name" value="Translation proteins"/>
    <property type="match status" value="1"/>
</dbReference>
<dbReference type="PROSITE" id="PS51722">
    <property type="entry name" value="G_TR_2"/>
    <property type="match status" value="1"/>
</dbReference>
<keyword id="KW-0342">GTP-binding</keyword>
<keyword id="KW-0396">Initiation factor</keyword>
<keyword id="KW-0547">Nucleotide-binding</keyword>
<keyword id="KW-0648">Protein biosynthesis</keyword>
<organism>
    <name type="scientific">Methanococcoides burtonii (strain DSM 6242 / NBRC 107633 / OCM 468 / ACE-M)</name>
    <dbReference type="NCBI Taxonomy" id="259564"/>
    <lineage>
        <taxon>Archaea</taxon>
        <taxon>Methanobacteriati</taxon>
        <taxon>Methanobacteriota</taxon>
        <taxon>Stenosarchaea group</taxon>
        <taxon>Methanomicrobia</taxon>
        <taxon>Methanosarcinales</taxon>
        <taxon>Methanosarcinaceae</taxon>
        <taxon>Methanococcoides</taxon>
    </lineage>
</organism>
<proteinExistence type="inferred from homology"/>
<evidence type="ECO:0000250" key="1"/>
<evidence type="ECO:0000255" key="2">
    <source>
        <dbReference type="HAMAP-Rule" id="MF_00100"/>
    </source>
</evidence>
<name>IF2P_METBU</name>